<organism>
    <name type="scientific">Arabidopsis thaliana</name>
    <name type="common">Mouse-ear cress</name>
    <dbReference type="NCBI Taxonomy" id="3702"/>
    <lineage>
        <taxon>Eukaryota</taxon>
        <taxon>Viridiplantae</taxon>
        <taxon>Streptophyta</taxon>
        <taxon>Embryophyta</taxon>
        <taxon>Tracheophyta</taxon>
        <taxon>Spermatophyta</taxon>
        <taxon>Magnoliopsida</taxon>
        <taxon>eudicotyledons</taxon>
        <taxon>Gunneridae</taxon>
        <taxon>Pentapetalae</taxon>
        <taxon>rosids</taxon>
        <taxon>malvids</taxon>
        <taxon>Brassicales</taxon>
        <taxon>Brassicaceae</taxon>
        <taxon>Camelineae</taxon>
        <taxon>Arabidopsis</taxon>
    </lineage>
</organism>
<name>Y1142_ARATH</name>
<dbReference type="EC" id="2.7.11.1"/>
<dbReference type="EMBL" id="AC004255">
    <property type="protein sequence ID" value="AAC13899.1"/>
    <property type="status" value="ALT_SEQ"/>
    <property type="molecule type" value="Genomic_DNA"/>
</dbReference>
<dbReference type="EMBL" id="CP002684">
    <property type="protein sequence ID" value="AEE33836.1"/>
    <property type="molecule type" value="Genomic_DNA"/>
</dbReference>
<dbReference type="RefSeq" id="NP_176337.1">
    <property type="nucleotide sequence ID" value="NM_104823.4"/>
</dbReference>
<dbReference type="SMR" id="O64778"/>
<dbReference type="BioGRID" id="27659">
    <property type="interactions" value="12"/>
</dbReference>
<dbReference type="FunCoup" id="O64778">
    <property type="interactions" value="1"/>
</dbReference>
<dbReference type="IntAct" id="O64778">
    <property type="interactions" value="12"/>
</dbReference>
<dbReference type="GlyGen" id="O64778">
    <property type="glycosylation" value="9 sites"/>
</dbReference>
<dbReference type="PaxDb" id="3702-AT1G61420.1"/>
<dbReference type="ProteomicsDB" id="242415"/>
<dbReference type="EnsemblPlants" id="AT1G61420.1">
    <property type="protein sequence ID" value="AT1G61420.1"/>
    <property type="gene ID" value="AT1G61420"/>
</dbReference>
<dbReference type="GeneID" id="842436"/>
<dbReference type="Gramene" id="AT1G61420.1">
    <property type="protein sequence ID" value="AT1G61420.1"/>
    <property type="gene ID" value="AT1G61420"/>
</dbReference>
<dbReference type="KEGG" id="ath:AT1G61420"/>
<dbReference type="Araport" id="AT1G61420"/>
<dbReference type="TAIR" id="AT1G61420"/>
<dbReference type="eggNOG" id="ENOG502QQPW">
    <property type="taxonomic scope" value="Eukaryota"/>
</dbReference>
<dbReference type="HOGENOM" id="CLU_000288_116_1_1"/>
<dbReference type="InParanoid" id="O64778"/>
<dbReference type="PhylomeDB" id="O64778"/>
<dbReference type="PRO" id="PR:O64778"/>
<dbReference type="Proteomes" id="UP000006548">
    <property type="component" value="Chromosome 1"/>
</dbReference>
<dbReference type="ExpressionAtlas" id="O64778">
    <property type="expression patterns" value="baseline and differential"/>
</dbReference>
<dbReference type="GO" id="GO:0005886">
    <property type="term" value="C:plasma membrane"/>
    <property type="evidence" value="ECO:0007669"/>
    <property type="project" value="UniProtKB-SubCell"/>
</dbReference>
<dbReference type="GO" id="GO:0005524">
    <property type="term" value="F:ATP binding"/>
    <property type="evidence" value="ECO:0007669"/>
    <property type="project" value="UniProtKB-KW"/>
</dbReference>
<dbReference type="GO" id="GO:0005516">
    <property type="term" value="F:calmodulin binding"/>
    <property type="evidence" value="ECO:0000250"/>
    <property type="project" value="UniProtKB"/>
</dbReference>
<dbReference type="GO" id="GO:0030246">
    <property type="term" value="F:carbohydrate binding"/>
    <property type="evidence" value="ECO:0007669"/>
    <property type="project" value="UniProtKB-KW"/>
</dbReference>
<dbReference type="GO" id="GO:0106310">
    <property type="term" value="F:protein serine kinase activity"/>
    <property type="evidence" value="ECO:0007669"/>
    <property type="project" value="RHEA"/>
</dbReference>
<dbReference type="GO" id="GO:0004674">
    <property type="term" value="F:protein serine/threonine kinase activity"/>
    <property type="evidence" value="ECO:0000250"/>
    <property type="project" value="UniProtKB"/>
</dbReference>
<dbReference type="GO" id="GO:0031625">
    <property type="term" value="F:ubiquitin protein ligase binding"/>
    <property type="evidence" value="ECO:0007669"/>
    <property type="project" value="UniProtKB-ARBA"/>
</dbReference>
<dbReference type="GO" id="GO:0048544">
    <property type="term" value="P:recognition of pollen"/>
    <property type="evidence" value="ECO:0007669"/>
    <property type="project" value="InterPro"/>
</dbReference>
<dbReference type="CDD" id="cd00028">
    <property type="entry name" value="B_lectin"/>
    <property type="match status" value="1"/>
</dbReference>
<dbReference type="CDD" id="cd01098">
    <property type="entry name" value="PAN_AP_plant"/>
    <property type="match status" value="1"/>
</dbReference>
<dbReference type="CDD" id="cd14066">
    <property type="entry name" value="STKc_IRAK"/>
    <property type="match status" value="1"/>
</dbReference>
<dbReference type="FunFam" id="1.10.510.10:FF:000345">
    <property type="entry name" value="G-type lectin S-receptor-like serine/threonine-protein kinase"/>
    <property type="match status" value="1"/>
</dbReference>
<dbReference type="FunFam" id="2.90.10.10:FF:000003">
    <property type="entry name" value="G-type lectin S-receptor-like serine/threonine-protein kinase"/>
    <property type="match status" value="1"/>
</dbReference>
<dbReference type="FunFam" id="3.30.200.20:FF:000401">
    <property type="entry name" value="G-type lectin S-receptor-like serine/threonine-protein kinase SD1-29"/>
    <property type="match status" value="1"/>
</dbReference>
<dbReference type="Gene3D" id="2.90.10.10">
    <property type="entry name" value="Bulb-type lectin domain"/>
    <property type="match status" value="1"/>
</dbReference>
<dbReference type="Gene3D" id="3.30.200.20">
    <property type="entry name" value="Phosphorylase Kinase, domain 1"/>
    <property type="match status" value="1"/>
</dbReference>
<dbReference type="Gene3D" id="1.10.510.10">
    <property type="entry name" value="Transferase(Phosphotransferase) domain 1"/>
    <property type="match status" value="1"/>
</dbReference>
<dbReference type="InterPro" id="IPR001480">
    <property type="entry name" value="Bulb-type_lectin_dom"/>
</dbReference>
<dbReference type="InterPro" id="IPR036426">
    <property type="entry name" value="Bulb-type_lectin_dom_sf"/>
</dbReference>
<dbReference type="InterPro" id="IPR011009">
    <property type="entry name" value="Kinase-like_dom_sf"/>
</dbReference>
<dbReference type="InterPro" id="IPR003609">
    <property type="entry name" value="Pan_app"/>
</dbReference>
<dbReference type="InterPro" id="IPR000719">
    <property type="entry name" value="Prot_kinase_dom"/>
</dbReference>
<dbReference type="InterPro" id="IPR021820">
    <property type="entry name" value="S-locus_recpt_kinase_C"/>
</dbReference>
<dbReference type="InterPro" id="IPR000858">
    <property type="entry name" value="S_locus_glycoprot_dom"/>
</dbReference>
<dbReference type="InterPro" id="IPR001245">
    <property type="entry name" value="Ser-Thr/Tyr_kinase_cat_dom"/>
</dbReference>
<dbReference type="InterPro" id="IPR008271">
    <property type="entry name" value="Ser/Thr_kinase_AS"/>
</dbReference>
<dbReference type="InterPro" id="IPR024171">
    <property type="entry name" value="SRK-like_kinase"/>
</dbReference>
<dbReference type="PANTHER" id="PTHR27002:SF506">
    <property type="entry name" value="ATP BINDING _ PROTEIN KINASE"/>
    <property type="match status" value="1"/>
</dbReference>
<dbReference type="PANTHER" id="PTHR27002">
    <property type="entry name" value="RECEPTOR-LIKE SERINE/THREONINE-PROTEIN KINASE SD1-8"/>
    <property type="match status" value="1"/>
</dbReference>
<dbReference type="Pfam" id="PF01453">
    <property type="entry name" value="B_lectin"/>
    <property type="match status" value="1"/>
</dbReference>
<dbReference type="Pfam" id="PF11883">
    <property type="entry name" value="DUF3403"/>
    <property type="match status" value="1"/>
</dbReference>
<dbReference type="Pfam" id="PF08276">
    <property type="entry name" value="PAN_2"/>
    <property type="match status" value="1"/>
</dbReference>
<dbReference type="Pfam" id="PF07714">
    <property type="entry name" value="PK_Tyr_Ser-Thr"/>
    <property type="match status" value="1"/>
</dbReference>
<dbReference type="Pfam" id="PF00954">
    <property type="entry name" value="S_locus_glycop"/>
    <property type="match status" value="1"/>
</dbReference>
<dbReference type="PIRSF" id="PIRSF000641">
    <property type="entry name" value="SRK"/>
    <property type="match status" value="1"/>
</dbReference>
<dbReference type="SMART" id="SM00108">
    <property type="entry name" value="B_lectin"/>
    <property type="match status" value="1"/>
</dbReference>
<dbReference type="SMART" id="SM00473">
    <property type="entry name" value="PAN_AP"/>
    <property type="match status" value="1"/>
</dbReference>
<dbReference type="SMART" id="SM00220">
    <property type="entry name" value="S_TKc"/>
    <property type="match status" value="1"/>
</dbReference>
<dbReference type="SUPFAM" id="SSF51110">
    <property type="entry name" value="alpha-D-mannose-specific plant lectins"/>
    <property type="match status" value="1"/>
</dbReference>
<dbReference type="SUPFAM" id="SSF56112">
    <property type="entry name" value="Protein kinase-like (PK-like)"/>
    <property type="match status" value="1"/>
</dbReference>
<dbReference type="PROSITE" id="PS50927">
    <property type="entry name" value="BULB_LECTIN"/>
    <property type="match status" value="1"/>
</dbReference>
<dbReference type="PROSITE" id="PS50948">
    <property type="entry name" value="PAN"/>
    <property type="match status" value="1"/>
</dbReference>
<dbReference type="PROSITE" id="PS50011">
    <property type="entry name" value="PROTEIN_KINASE_DOM"/>
    <property type="match status" value="1"/>
</dbReference>
<dbReference type="PROSITE" id="PS00108">
    <property type="entry name" value="PROTEIN_KINASE_ST"/>
    <property type="match status" value="1"/>
</dbReference>
<proteinExistence type="inferred from homology"/>
<reference key="1">
    <citation type="journal article" date="2000" name="Nature">
        <title>Sequence and analysis of chromosome 1 of the plant Arabidopsis thaliana.</title>
        <authorList>
            <person name="Theologis A."/>
            <person name="Ecker J.R."/>
            <person name="Palm C.J."/>
            <person name="Federspiel N.A."/>
            <person name="Kaul S."/>
            <person name="White O."/>
            <person name="Alonso J."/>
            <person name="Altafi H."/>
            <person name="Araujo R."/>
            <person name="Bowman C.L."/>
            <person name="Brooks S.Y."/>
            <person name="Buehler E."/>
            <person name="Chan A."/>
            <person name="Chao Q."/>
            <person name="Chen H."/>
            <person name="Cheuk R.F."/>
            <person name="Chin C.W."/>
            <person name="Chung M.K."/>
            <person name="Conn L."/>
            <person name="Conway A.B."/>
            <person name="Conway A.R."/>
            <person name="Creasy T.H."/>
            <person name="Dewar K."/>
            <person name="Dunn P."/>
            <person name="Etgu P."/>
            <person name="Feldblyum T.V."/>
            <person name="Feng J.-D."/>
            <person name="Fong B."/>
            <person name="Fujii C.Y."/>
            <person name="Gill J.E."/>
            <person name="Goldsmith A.D."/>
            <person name="Haas B."/>
            <person name="Hansen N.F."/>
            <person name="Hughes B."/>
            <person name="Huizar L."/>
            <person name="Hunter J.L."/>
            <person name="Jenkins J."/>
            <person name="Johnson-Hopson C."/>
            <person name="Khan S."/>
            <person name="Khaykin E."/>
            <person name="Kim C.J."/>
            <person name="Koo H.L."/>
            <person name="Kremenetskaia I."/>
            <person name="Kurtz D.B."/>
            <person name="Kwan A."/>
            <person name="Lam B."/>
            <person name="Langin-Hooper S."/>
            <person name="Lee A."/>
            <person name="Lee J.M."/>
            <person name="Lenz C.A."/>
            <person name="Li J.H."/>
            <person name="Li Y.-P."/>
            <person name="Lin X."/>
            <person name="Liu S.X."/>
            <person name="Liu Z.A."/>
            <person name="Luros J.S."/>
            <person name="Maiti R."/>
            <person name="Marziali A."/>
            <person name="Militscher J."/>
            <person name="Miranda M."/>
            <person name="Nguyen M."/>
            <person name="Nierman W.C."/>
            <person name="Osborne B.I."/>
            <person name="Pai G."/>
            <person name="Peterson J."/>
            <person name="Pham P.K."/>
            <person name="Rizzo M."/>
            <person name="Rooney T."/>
            <person name="Rowley D."/>
            <person name="Sakano H."/>
            <person name="Salzberg S.L."/>
            <person name="Schwartz J.R."/>
            <person name="Shinn P."/>
            <person name="Southwick A.M."/>
            <person name="Sun H."/>
            <person name="Tallon L.J."/>
            <person name="Tambunga G."/>
            <person name="Toriumi M.J."/>
            <person name="Town C.D."/>
            <person name="Utterback T."/>
            <person name="Van Aken S."/>
            <person name="Vaysberg M."/>
            <person name="Vysotskaia V.S."/>
            <person name="Walker M."/>
            <person name="Wu D."/>
            <person name="Yu G."/>
            <person name="Fraser C.M."/>
            <person name="Venter J.C."/>
            <person name="Davis R.W."/>
        </authorList>
    </citation>
    <scope>NUCLEOTIDE SEQUENCE [LARGE SCALE GENOMIC DNA]</scope>
    <source>
        <strain>cv. Columbia</strain>
    </source>
</reference>
<reference key="2">
    <citation type="journal article" date="2017" name="Plant J.">
        <title>Araport11: a complete reannotation of the Arabidopsis thaliana reference genome.</title>
        <authorList>
            <person name="Cheng C.Y."/>
            <person name="Krishnakumar V."/>
            <person name="Chan A.P."/>
            <person name="Thibaud-Nissen F."/>
            <person name="Schobel S."/>
            <person name="Town C.D."/>
        </authorList>
    </citation>
    <scope>GENOME REANNOTATION</scope>
    <source>
        <strain>cv. Columbia</strain>
    </source>
</reference>
<accession>O64778</accession>
<protein>
    <recommendedName>
        <fullName>G-type lectin S-receptor-like serine/threonine-protein kinase At1g61420</fullName>
        <ecNumber>2.7.11.1</ecNumber>
    </recommendedName>
</protein>
<comment type="catalytic activity">
    <reaction>
        <text>L-seryl-[protein] + ATP = O-phospho-L-seryl-[protein] + ADP + H(+)</text>
        <dbReference type="Rhea" id="RHEA:17989"/>
        <dbReference type="Rhea" id="RHEA-COMP:9863"/>
        <dbReference type="Rhea" id="RHEA-COMP:11604"/>
        <dbReference type="ChEBI" id="CHEBI:15378"/>
        <dbReference type="ChEBI" id="CHEBI:29999"/>
        <dbReference type="ChEBI" id="CHEBI:30616"/>
        <dbReference type="ChEBI" id="CHEBI:83421"/>
        <dbReference type="ChEBI" id="CHEBI:456216"/>
        <dbReference type="EC" id="2.7.11.1"/>
    </reaction>
</comment>
<comment type="catalytic activity">
    <reaction>
        <text>L-threonyl-[protein] + ATP = O-phospho-L-threonyl-[protein] + ADP + H(+)</text>
        <dbReference type="Rhea" id="RHEA:46608"/>
        <dbReference type="Rhea" id="RHEA-COMP:11060"/>
        <dbReference type="Rhea" id="RHEA-COMP:11605"/>
        <dbReference type="ChEBI" id="CHEBI:15378"/>
        <dbReference type="ChEBI" id="CHEBI:30013"/>
        <dbReference type="ChEBI" id="CHEBI:30616"/>
        <dbReference type="ChEBI" id="CHEBI:61977"/>
        <dbReference type="ChEBI" id="CHEBI:456216"/>
        <dbReference type="EC" id="2.7.11.1"/>
    </reaction>
</comment>
<comment type="subcellular location">
    <subcellularLocation>
        <location evidence="1">Cell membrane</location>
        <topology evidence="1">Single-pass type I membrane protein</topology>
    </subcellularLocation>
</comment>
<comment type="similarity">
    <text evidence="5">Belongs to the protein kinase superfamily. Ser/Thr protein kinase family.</text>
</comment>
<comment type="sequence caution" evidence="8">
    <conflict type="erroneous gene model prediction">
        <sequence resource="EMBL-CDS" id="AAC13899"/>
    </conflict>
</comment>
<keyword id="KW-0067">ATP-binding</keyword>
<keyword id="KW-1003">Cell membrane</keyword>
<keyword id="KW-1015">Disulfide bond</keyword>
<keyword id="KW-0245">EGF-like domain</keyword>
<keyword id="KW-0325">Glycoprotein</keyword>
<keyword id="KW-0418">Kinase</keyword>
<keyword id="KW-0430">Lectin</keyword>
<keyword id="KW-0472">Membrane</keyword>
<keyword id="KW-0547">Nucleotide-binding</keyword>
<keyword id="KW-0597">Phosphoprotein</keyword>
<keyword id="KW-0675">Receptor</keyword>
<keyword id="KW-1185">Reference proteome</keyword>
<keyword id="KW-0723">Serine/threonine-protein kinase</keyword>
<keyword id="KW-0732">Signal</keyword>
<keyword id="KW-0808">Transferase</keyword>
<keyword id="KW-0812">Transmembrane</keyword>
<keyword id="KW-1133">Transmembrane helix</keyword>
<evidence type="ECO:0000250" key="1"/>
<evidence type="ECO:0000250" key="2">
    <source>
        <dbReference type="UniProtKB" id="Q9LPZ9"/>
    </source>
</evidence>
<evidence type="ECO:0000255" key="3"/>
<evidence type="ECO:0000255" key="4">
    <source>
        <dbReference type="PROSITE-ProRule" id="PRU00038"/>
    </source>
</evidence>
<evidence type="ECO:0000255" key="5">
    <source>
        <dbReference type="PROSITE-ProRule" id="PRU00159"/>
    </source>
</evidence>
<evidence type="ECO:0000255" key="6">
    <source>
        <dbReference type="PROSITE-ProRule" id="PRU00315"/>
    </source>
</evidence>
<evidence type="ECO:0000255" key="7">
    <source>
        <dbReference type="PROSITE-ProRule" id="PRU10027"/>
    </source>
</evidence>
<evidence type="ECO:0000305" key="8"/>
<feature type="signal peptide" evidence="3">
    <location>
        <begin position="1"/>
        <end position="24"/>
    </location>
</feature>
<feature type="chain" id="PRO_0000401321" description="G-type lectin S-receptor-like serine/threonine-protein kinase At1g61420">
    <location>
        <begin position="25"/>
        <end position="807"/>
    </location>
</feature>
<feature type="topological domain" description="Extracellular" evidence="3">
    <location>
        <begin position="25"/>
        <end position="426"/>
    </location>
</feature>
<feature type="transmembrane region" description="Helical" evidence="3">
    <location>
        <begin position="427"/>
        <end position="447"/>
    </location>
</feature>
<feature type="topological domain" description="Cytoplasmic" evidence="3">
    <location>
        <begin position="448"/>
        <end position="807"/>
    </location>
</feature>
<feature type="domain" description="Bulb-type lectin" evidence="4">
    <location>
        <begin position="25"/>
        <end position="144"/>
    </location>
</feature>
<feature type="domain" description="EGF-like; atypical">
    <location>
        <begin position="278"/>
        <end position="314"/>
    </location>
</feature>
<feature type="domain" description="PAN" evidence="6">
    <location>
        <begin position="333"/>
        <end position="413"/>
    </location>
</feature>
<feature type="domain" description="Protein kinase" evidence="5">
    <location>
        <begin position="494"/>
        <end position="779"/>
    </location>
</feature>
<feature type="region of interest" description="CaM-binding" evidence="1">
    <location>
        <begin position="583"/>
        <end position="600"/>
    </location>
</feature>
<feature type="active site" description="Proton acceptor" evidence="5 7">
    <location>
        <position position="619"/>
    </location>
</feature>
<feature type="binding site" evidence="5">
    <location>
        <begin position="500"/>
        <end position="508"/>
    </location>
    <ligand>
        <name>ATP</name>
        <dbReference type="ChEBI" id="CHEBI:30616"/>
    </ligand>
</feature>
<feature type="binding site" evidence="5">
    <location>
        <position position="522"/>
    </location>
    <ligand>
        <name>ATP</name>
        <dbReference type="ChEBI" id="CHEBI:30616"/>
    </ligand>
</feature>
<feature type="modified residue" description="Phosphoserine" evidence="2">
    <location>
        <position position="528"/>
    </location>
</feature>
<feature type="modified residue" description="Phosphoserine" evidence="2">
    <location>
        <position position="543"/>
    </location>
</feature>
<feature type="modified residue" description="Phosphoserine" evidence="2">
    <location>
        <position position="623"/>
    </location>
</feature>
<feature type="modified residue" description="Phosphoserine" evidence="2">
    <location>
        <position position="636"/>
    </location>
</feature>
<feature type="modified residue" description="Phosphothreonine" evidence="2">
    <location>
        <position position="653"/>
    </location>
</feature>
<feature type="modified residue" description="Phosphoserine" evidence="2">
    <location>
        <position position="696"/>
    </location>
</feature>
<feature type="modified residue" description="Phosphoserine" evidence="2">
    <location>
        <position position="790"/>
    </location>
</feature>
<feature type="glycosylation site" description="N-linked (GlcNAc...) asparagine" evidence="3">
    <location>
        <position position="53"/>
    </location>
</feature>
<feature type="glycosylation site" description="N-linked (GlcNAc...) asparagine" evidence="3">
    <location>
        <position position="94"/>
    </location>
</feature>
<feature type="glycosylation site" description="N-linked (GlcNAc...) asparagine" evidence="3">
    <location>
        <position position="117"/>
    </location>
</feature>
<feature type="glycosylation site" description="N-linked (GlcNAc...) asparagine" evidence="3">
    <location>
        <position position="134"/>
    </location>
</feature>
<feature type="glycosylation site" description="N-linked (GlcNAc...) asparagine" evidence="3">
    <location>
        <position position="236"/>
    </location>
</feature>
<feature type="glycosylation site" description="N-linked (GlcNAc...) asparagine" evidence="3">
    <location>
        <position position="267"/>
    </location>
</feature>
<feature type="glycosylation site" description="N-linked (GlcNAc...) asparagine" evidence="3">
    <location>
        <position position="320"/>
    </location>
</feature>
<feature type="glycosylation site" description="N-linked (GlcNAc...) asparagine" evidence="3">
    <location>
        <position position="336"/>
    </location>
</feature>
<feature type="glycosylation site" description="N-linked (GlcNAc...) asparagine" evidence="3">
    <location>
        <position position="375"/>
    </location>
</feature>
<feature type="disulfide bond" evidence="1">
    <location>
        <begin position="282"/>
        <end position="294"/>
    </location>
</feature>
<feature type="disulfide bond" evidence="1">
    <location>
        <begin position="288"/>
        <end position="302"/>
    </location>
</feature>
<feature type="disulfide bond" evidence="1">
    <location>
        <begin position="368"/>
        <end position="389"/>
    </location>
</feature>
<feature type="disulfide bond" evidence="1">
    <location>
        <begin position="372"/>
        <end position="378"/>
    </location>
</feature>
<sequence length="807" mass="90406">MGKKWIVFFAYLLLSSFFISSSSAGITKESPLPIGQTLSSSNGFYELGFFNFNNSQNQYVGIWFKGIIPRVVVWVANREKPVTDSTANLAISNNGSLLLFNGKHGVAWSSGEALVSNGSRAELSDTGNLIVIDNFSGRTLWQSFDHLGDTMLPSSTLKYNLATGEKQVLSSWKSYTDPSVGDFVLQITPQVPTQVLVTKGSTPYYRSGPWAKTRFTGIPLMDDTFTGPVSVQQDTNGSGSLTYLNRNDRLQRTMLTSKGTQELSWHNGTDWVLNFVAPEHSCDYYGVCGPFGLCVKSVPPKCTCFKGFVPKLIEEWKRGNWTGGCVRRTELYCQGNSTGKYANVFHPVARIKPPDFYEFASFVNVEECQKSCLHNCSCLAFAYIDGIGCLMWNQDLMDAVQFSEGGELLSIRLARSELGGNKRKKAITASIVSLSLVVIIAFVAFCFWRYRVKHNADITTDASQVSWRNDLKPQDVPGLDFFDMHTIQTATNNFSISNKLGQGGFGPVYKGKLQDGKEIAVKRLSSSSGQGKEEFMNEIVLISKLQHKNLVRILGCCIEGEEKLLIYEFMLNNSLDTFLFDSRKRLEIDWPKRLDIIQGIARGIHYLHRDSHLKVIHRDLKVSNILLDEKMNPKISDFGLARMYQGTEYQDNTRRVVGTLGYMAPEYAWTGMFSEKSDIYSFGVLMLEIISGEKISRFSYGKEEKTLIAYAWESWCDTGGIDLLDKDVADSCRPLEVERCVQIGLLCVQHQPADRPNTLELLSMLTTTSDLPPPEQPTFVVHRRDDKSSSEDLITVNEMTKSVILGR</sequence>
<gene>
    <name type="ordered locus">At1g61420</name>
    <name type="ORF">T1F9.9</name>
</gene>